<accession>P0C021</accession>
<accession>P02419</accession>
<reference key="1">
    <citation type="journal article" date="2002" name="Nucleic Acids Res.">
        <title>Genome sequence of Shigella flexneri 2a: insights into pathogenicity through comparison with genomes of Escherichia coli K12 and O157.</title>
        <authorList>
            <person name="Jin Q."/>
            <person name="Yuan Z."/>
            <person name="Xu J."/>
            <person name="Wang Y."/>
            <person name="Shen Y."/>
            <person name="Lu W."/>
            <person name="Wang J."/>
            <person name="Liu H."/>
            <person name="Yang J."/>
            <person name="Yang F."/>
            <person name="Zhang X."/>
            <person name="Zhang J."/>
            <person name="Yang G."/>
            <person name="Wu H."/>
            <person name="Qu D."/>
            <person name="Dong J."/>
            <person name="Sun L."/>
            <person name="Xue Y."/>
            <person name="Zhao A."/>
            <person name="Gao Y."/>
            <person name="Zhu J."/>
            <person name="Kan B."/>
            <person name="Ding K."/>
            <person name="Chen S."/>
            <person name="Cheng H."/>
            <person name="Yao Z."/>
            <person name="He B."/>
            <person name="Chen R."/>
            <person name="Ma D."/>
            <person name="Qiang B."/>
            <person name="Wen Y."/>
            <person name="Hou Y."/>
            <person name="Yu J."/>
        </authorList>
    </citation>
    <scope>NUCLEOTIDE SEQUENCE [LARGE SCALE GENOMIC DNA]</scope>
    <source>
        <strain>301 / Serotype 2a</strain>
    </source>
</reference>
<reference key="2">
    <citation type="journal article" date="2003" name="Infect. Immun.">
        <title>Complete genome sequence and comparative genomics of Shigella flexneri serotype 2a strain 2457T.</title>
        <authorList>
            <person name="Wei J."/>
            <person name="Goldberg M.B."/>
            <person name="Burland V."/>
            <person name="Venkatesan M.M."/>
            <person name="Deng W."/>
            <person name="Fournier G."/>
            <person name="Mayhew G.F."/>
            <person name="Plunkett G. III"/>
            <person name="Rose D.J."/>
            <person name="Darling A."/>
            <person name="Mau B."/>
            <person name="Perna N.T."/>
            <person name="Payne S.M."/>
            <person name="Runyen-Janecky L.J."/>
            <person name="Zhou S."/>
            <person name="Schwartz D.C."/>
            <person name="Blattner F.R."/>
        </authorList>
    </citation>
    <scope>NUCLEOTIDE SEQUENCE [LARGE SCALE GENOMIC DNA]</scope>
    <source>
        <strain>ATCC 700930 / 2457T / Serotype 2a</strain>
    </source>
</reference>
<organism>
    <name type="scientific">Shigella flexneri</name>
    <dbReference type="NCBI Taxonomy" id="623"/>
    <lineage>
        <taxon>Bacteria</taxon>
        <taxon>Pseudomonadati</taxon>
        <taxon>Pseudomonadota</taxon>
        <taxon>Gammaproteobacteria</taxon>
        <taxon>Enterobacterales</taxon>
        <taxon>Enterobacteriaceae</taxon>
        <taxon>Shigella</taxon>
    </lineage>
</organism>
<evidence type="ECO:0000255" key="1">
    <source>
        <dbReference type="HAMAP-Rule" id="MF_01337"/>
    </source>
</evidence>
<evidence type="ECO:0000305" key="2"/>
<dbReference type="EMBL" id="AE005674">
    <property type="protein sequence ID" value="AAN44799.1"/>
    <property type="molecule type" value="Genomic_DNA"/>
</dbReference>
<dbReference type="EMBL" id="AE014073">
    <property type="protein sequence ID" value="AAP19377.1"/>
    <property type="molecule type" value="Genomic_DNA"/>
</dbReference>
<dbReference type="RefSeq" id="NP_709092.1">
    <property type="nucleotide sequence ID" value="NC_004337.2"/>
</dbReference>
<dbReference type="RefSeq" id="WP_000358960.1">
    <property type="nucleotide sequence ID" value="NZ_WPGW01000088.1"/>
</dbReference>
<dbReference type="SMR" id="P0C021"/>
<dbReference type="STRING" id="198214.SF3336"/>
<dbReference type="PaxDb" id="198214-SF3336"/>
<dbReference type="GeneID" id="1027032"/>
<dbReference type="GeneID" id="98390426"/>
<dbReference type="KEGG" id="sfl:SF3336"/>
<dbReference type="KEGG" id="sfx:S4426"/>
<dbReference type="PATRIC" id="fig|198214.7.peg.3945"/>
<dbReference type="HOGENOM" id="CLU_098841_0_1_6"/>
<dbReference type="Proteomes" id="UP000001006">
    <property type="component" value="Chromosome"/>
</dbReference>
<dbReference type="Proteomes" id="UP000002673">
    <property type="component" value="Chromosome"/>
</dbReference>
<dbReference type="GO" id="GO:0022625">
    <property type="term" value="C:cytosolic large ribosomal subunit"/>
    <property type="evidence" value="ECO:0007669"/>
    <property type="project" value="TreeGrafter"/>
</dbReference>
<dbReference type="GO" id="GO:0008097">
    <property type="term" value="F:5S rRNA binding"/>
    <property type="evidence" value="ECO:0007669"/>
    <property type="project" value="TreeGrafter"/>
</dbReference>
<dbReference type="GO" id="GO:0003735">
    <property type="term" value="F:structural constituent of ribosome"/>
    <property type="evidence" value="ECO:0007669"/>
    <property type="project" value="InterPro"/>
</dbReference>
<dbReference type="GO" id="GO:0006412">
    <property type="term" value="P:translation"/>
    <property type="evidence" value="ECO:0007669"/>
    <property type="project" value="UniProtKB-UniRule"/>
</dbReference>
<dbReference type="CDD" id="cd00432">
    <property type="entry name" value="Ribosomal_L18_L5e"/>
    <property type="match status" value="1"/>
</dbReference>
<dbReference type="FunFam" id="3.30.420.100:FF:000001">
    <property type="entry name" value="50S ribosomal protein L18"/>
    <property type="match status" value="1"/>
</dbReference>
<dbReference type="Gene3D" id="3.30.420.100">
    <property type="match status" value="1"/>
</dbReference>
<dbReference type="HAMAP" id="MF_01337_B">
    <property type="entry name" value="Ribosomal_uL18_B"/>
    <property type="match status" value="1"/>
</dbReference>
<dbReference type="InterPro" id="IPR004389">
    <property type="entry name" value="Ribosomal_uL18_bac-type"/>
</dbReference>
<dbReference type="InterPro" id="IPR005484">
    <property type="entry name" value="Ribosomal_uL18_bac/euk"/>
</dbReference>
<dbReference type="NCBIfam" id="TIGR00060">
    <property type="entry name" value="L18_bact"/>
    <property type="match status" value="1"/>
</dbReference>
<dbReference type="PANTHER" id="PTHR12899">
    <property type="entry name" value="39S RIBOSOMAL PROTEIN L18, MITOCHONDRIAL"/>
    <property type="match status" value="1"/>
</dbReference>
<dbReference type="PANTHER" id="PTHR12899:SF3">
    <property type="entry name" value="LARGE RIBOSOMAL SUBUNIT PROTEIN UL18M"/>
    <property type="match status" value="1"/>
</dbReference>
<dbReference type="Pfam" id="PF00861">
    <property type="entry name" value="Ribosomal_L18p"/>
    <property type="match status" value="1"/>
</dbReference>
<dbReference type="SUPFAM" id="SSF53137">
    <property type="entry name" value="Translational machinery components"/>
    <property type="match status" value="1"/>
</dbReference>
<feature type="chain" id="PRO_0000131339" description="Large ribosomal subunit protein uL18">
    <location>
        <begin position="1"/>
        <end position="117"/>
    </location>
</feature>
<protein>
    <recommendedName>
        <fullName evidence="1">Large ribosomal subunit protein uL18</fullName>
    </recommendedName>
    <alternativeName>
        <fullName evidence="2">50S ribosomal protein L18</fullName>
    </alternativeName>
</protein>
<sequence>MDKKSARIRRATRARRKLQELGATRLVVHRTPRHIYAQVIAPNGSEVLVAASTVEKAIAEQLKYTGNKDAAAAVGKAVAERALEKGIKDVSFDRSGFQYHGRVQALADAAREAGLQF</sequence>
<comment type="function">
    <text evidence="1">This is one of the proteins that bind and probably mediate the attachment of the 5S RNA into the large ribosomal subunit, where it forms part of the central protuberance.</text>
</comment>
<comment type="subunit">
    <text evidence="1">Part of the 50S ribosomal subunit; part of the 5S rRNA/L5/L18/L25 subcomplex. Contacts the 5S and 23S rRNAs.</text>
</comment>
<comment type="similarity">
    <text evidence="1">Belongs to the universal ribosomal protein uL18 family.</text>
</comment>
<gene>
    <name evidence="1" type="primary">rplR</name>
    <name type="ordered locus">SF3336</name>
    <name type="ordered locus">S4426</name>
</gene>
<keyword id="KW-1185">Reference proteome</keyword>
<keyword id="KW-0687">Ribonucleoprotein</keyword>
<keyword id="KW-0689">Ribosomal protein</keyword>
<keyword id="KW-0694">RNA-binding</keyword>
<keyword id="KW-0699">rRNA-binding</keyword>
<proteinExistence type="inferred from homology"/>
<name>RL18_SHIFL</name>